<keyword id="KW-0903">Direct protein sequencing</keyword>
<keyword id="KW-0256">Endoplasmic reticulum</keyword>
<keyword id="KW-0349">Heme</keyword>
<keyword id="KW-0408">Iron</keyword>
<keyword id="KW-1017">Isopeptide bond</keyword>
<keyword id="KW-0444">Lipid biosynthesis</keyword>
<keyword id="KW-0443">Lipid metabolism</keyword>
<keyword id="KW-0472">Membrane</keyword>
<keyword id="KW-0479">Metal-binding</keyword>
<keyword id="KW-0521">NADP</keyword>
<keyword id="KW-0560">Oxidoreductase</keyword>
<keyword id="KW-1185">Reference proteome</keyword>
<keyword id="KW-0752">Steroid biosynthesis</keyword>
<keyword id="KW-0753">Steroid metabolism</keyword>
<keyword id="KW-0756">Sterol biosynthesis</keyword>
<keyword id="KW-1207">Sterol metabolism</keyword>
<keyword id="KW-0812">Transmembrane</keyword>
<keyword id="KW-1133">Transmembrane helix</keyword>
<keyword id="KW-0832">Ubl conjugation</keyword>
<proteinExistence type="evidence at protein level"/>
<feature type="chain" id="PRO_0000052050" description="C-22 sterol desaturase ERG5">
    <location>
        <begin position="1"/>
        <end position="538"/>
    </location>
</feature>
<feature type="transmembrane region" description="Helical" evidence="2">
    <location>
        <begin position="46"/>
        <end position="66"/>
    </location>
</feature>
<feature type="binding site" description="axial binding residue" evidence="1">
    <location>
        <position position="476"/>
    </location>
    <ligand>
        <name>heme</name>
        <dbReference type="ChEBI" id="CHEBI:30413"/>
    </ligand>
    <ligandPart>
        <name>Fe</name>
        <dbReference type="ChEBI" id="CHEBI:18248"/>
    </ligandPart>
</feature>
<feature type="cross-link" description="Glycyl lysine isopeptide (Lys-Gly) (interchain with G-Cter in ubiquitin)" evidence="3">
    <location>
        <position position="164"/>
    </location>
</feature>
<feature type="cross-link" description="Glycyl lysine isopeptide (Lys-Gly) (interchain with G-Cter in ubiquitin)" evidence="3">
    <location>
        <position position="198"/>
    </location>
</feature>
<feature type="sequence conflict" description="In Ref. 4; AAU09769." evidence="12" ref="4">
    <original>I</original>
    <variation>T</variation>
    <location>
        <position position="286"/>
    </location>
</feature>
<comment type="function">
    <text evidence="7 8 9">C-22 sterol desaturase; part of the third module of ergosterol biosynthesis pathway that includes the late steps of the pathway (PubMed:8543054, PubMed:8635732). ERG5 converts 5-dehydroepisterol into ergosta-5,7,22,24(28)-tetraen-3beta-ol by forming the C-22(23) double bond in the sterol side chain (PubMed:8543054, PubMed:8635732). The third module or late pathway involves the ergosterol synthesis itself through consecutive reactions that mainly occur in the endoplasmic reticulum (ER) membrane. Firstly, the squalene synthase ERG9 catalyzes the condensation of 2 farnesyl pyrophosphate moieties to form squalene, which is the precursor of all steroids. Squalene synthase is crucial for balancing the incorporation of farnesyl diphosphate (FPP) into sterol and nonsterol isoprene synthesis. Secondly, the squalene epoxidase ERG1 catalyzes the stereospecific oxidation of squalene to (S)-2,3-epoxysqualene, which is considered to be a rate-limiting enzyme in steroid biosynthesis. Then, the lanosterol synthase ERG7 catalyzes the cyclization of (S)-2,3 oxidosqualene to lanosterol, a reaction that forms the sterol core. In the next steps, lanosterol is transformed to zymosterol through a complex process involving various demethylation, reduction and desaturation reactions. The lanosterol 14-alpha-demethylase ERG11 (also known as CYP51) catalyzes C14-demethylation of lanosterol to produce 4,4'-dimethyl cholesta-8,14,24-triene-3-beta-ol, which is critical for ergosterol biosynthesis. The C-14 reductase ERG24 reduces the C14=C15 double bond of 4,4-dimethyl-cholesta-8,14,24-trienol to produce 4,4-dimethyl-cholesta-8,24-dienol. 4,4-dimethyl-cholesta-8,24-dienol is substrate of the C-4 demethylation complex ERG25-ERG26-ERG27 in which ERG25 catalyzes the three-step monooxygenation required for the demethylation of 4,4-dimethyl and 4alpha-methylsterols, ERG26 catalyzes the oxidative decarboxylation that results in a reduction of the 3-beta-hydroxy group at the C-3 carbon to an oxo group, and ERG27 is responsible for the reduction of the keto group on the C-3. ERG28 has a role as a scaffold to help anchor ERG25, ERG26 and ERG27 to the endoplasmic reticulum and ERG29 regulates the activity of the iron-containing C4-methylsterol oxidase ERG25. Then, the sterol 24-C-methyltransferase ERG6 catalyzes the methyl transfer from S-adenosyl-methionine to the C-24 of zymosterol to form fecosterol. The C-8 sterol isomerase ERG2 catalyzes the reaction which results in unsaturation at C-7 in the B ring of sterols and thus converts fecosterol to episterol. The sterol-C5-desaturase ERG3 then catalyzes the introduction of a C-5 double bond in the B ring to produce 5-dehydroepisterol. The C-22 sterol desaturase ERG5 further converts 5-dehydroepisterol into ergosta-5,7,22,24(28)-tetraen-3beta-ol by forming the C-22(23) double bond in the sterol side chain. Finally, ergosta-5,7,22,24(28)-tetraen-3beta-ol is substrate of the C-24(28) sterol reductase ERG4 to produce ergosterol (PubMed:32679672).</text>
</comment>
<comment type="catalytic activity">
    <reaction evidence="7 8">
        <text>5-dehydroepisterol + NADPH + O2 + H(+) = ergosta-5,7,22,24(28)-tetraen-3beta-ol + NADP(+) + 2 H2O</text>
        <dbReference type="Rhea" id="RHEA:33467"/>
        <dbReference type="ChEBI" id="CHEBI:15377"/>
        <dbReference type="ChEBI" id="CHEBI:15378"/>
        <dbReference type="ChEBI" id="CHEBI:15379"/>
        <dbReference type="ChEBI" id="CHEBI:18249"/>
        <dbReference type="ChEBI" id="CHEBI:52972"/>
        <dbReference type="ChEBI" id="CHEBI:57783"/>
        <dbReference type="ChEBI" id="CHEBI:58349"/>
        <dbReference type="EC" id="1.14.19.41"/>
    </reaction>
    <physiologicalReaction direction="left-to-right" evidence="7 8">
        <dbReference type="Rhea" id="RHEA:33468"/>
    </physiologicalReaction>
</comment>
<comment type="cofactor">
    <cofactor evidence="1">
        <name>heme</name>
        <dbReference type="ChEBI" id="CHEBI:30413"/>
    </cofactor>
</comment>
<comment type="pathway">
    <text evidence="8">Steroid metabolism; ergosterol biosynthesis; ergosterol from zymosterol: step 4/5.</text>
</comment>
<comment type="subunit">
    <text evidence="5">Interacts with ERG28.</text>
</comment>
<comment type="subcellular location">
    <subcellularLocation>
        <location evidence="12">Endoplasmic reticulum membrane</location>
        <topology evidence="2">Single-pass membrane protein</topology>
    </subcellularLocation>
</comment>
<comment type="disruption phenotype">
    <text evidence="6">Abolishes the production of ergosterol.</text>
</comment>
<comment type="miscellaneous">
    <text evidence="4">Present with 24700 molecules/cell in log phase SD medium.</text>
</comment>
<comment type="similarity">
    <text evidence="12">Belongs to the cytochrome P450 family.</text>
</comment>
<organism>
    <name type="scientific">Saccharomyces cerevisiae (strain ATCC 204508 / S288c)</name>
    <name type="common">Baker's yeast</name>
    <dbReference type="NCBI Taxonomy" id="559292"/>
    <lineage>
        <taxon>Eukaryota</taxon>
        <taxon>Fungi</taxon>
        <taxon>Dikarya</taxon>
        <taxon>Ascomycota</taxon>
        <taxon>Saccharomycotina</taxon>
        <taxon>Saccharomycetes</taxon>
        <taxon>Saccharomycetales</taxon>
        <taxon>Saccharomycetaceae</taxon>
        <taxon>Saccharomyces</taxon>
    </lineage>
</organism>
<dbReference type="EC" id="1.14.19.41" evidence="7 8"/>
<dbReference type="EMBL" id="U34636">
    <property type="protein sequence ID" value="AAB06217.1"/>
    <property type="molecule type" value="Genomic_DNA"/>
</dbReference>
<dbReference type="EMBL" id="Z49211">
    <property type="protein sequence ID" value="CAA89116.1"/>
    <property type="molecule type" value="Genomic_DNA"/>
</dbReference>
<dbReference type="EMBL" id="AY723852">
    <property type="protein sequence ID" value="AAU09769.1"/>
    <property type="molecule type" value="Genomic_DNA"/>
</dbReference>
<dbReference type="EMBL" id="BK006946">
    <property type="protein sequence ID" value="DAA09913.1"/>
    <property type="molecule type" value="Genomic_DNA"/>
</dbReference>
<dbReference type="PIR" id="S54015">
    <property type="entry name" value="S54015"/>
</dbReference>
<dbReference type="RefSeq" id="NP_013728.1">
    <property type="nucleotide sequence ID" value="NM_001182511.1"/>
</dbReference>
<dbReference type="SMR" id="P54781"/>
<dbReference type="BioGRID" id="35186">
    <property type="interactions" value="255"/>
</dbReference>
<dbReference type="FunCoup" id="P54781">
    <property type="interactions" value="1954"/>
</dbReference>
<dbReference type="IntAct" id="P54781">
    <property type="interactions" value="18"/>
</dbReference>
<dbReference type="MINT" id="P54781"/>
<dbReference type="STRING" id="4932.YMR015C"/>
<dbReference type="iPTMnet" id="P54781"/>
<dbReference type="PaxDb" id="4932-YMR015C"/>
<dbReference type="PeptideAtlas" id="P54781"/>
<dbReference type="EnsemblFungi" id="YMR015C_mRNA">
    <property type="protein sequence ID" value="YMR015C"/>
    <property type="gene ID" value="YMR015C"/>
</dbReference>
<dbReference type="GeneID" id="855029"/>
<dbReference type="KEGG" id="sce:YMR015C"/>
<dbReference type="AGR" id="SGD:S000004617"/>
<dbReference type="SGD" id="S000004617">
    <property type="gene designation" value="ERG5"/>
</dbReference>
<dbReference type="VEuPathDB" id="FungiDB:YMR015C"/>
<dbReference type="eggNOG" id="KOG0157">
    <property type="taxonomic scope" value="Eukaryota"/>
</dbReference>
<dbReference type="HOGENOM" id="CLU_023517_0_0_1"/>
<dbReference type="InParanoid" id="P54781"/>
<dbReference type="OMA" id="KCIGLEY"/>
<dbReference type="OrthoDB" id="1372046at2759"/>
<dbReference type="BioCyc" id="MetaCyc:MONOMER3O-232"/>
<dbReference type="BioCyc" id="YEAST:MONOMER3O-232"/>
<dbReference type="BRENDA" id="1.14.19.41">
    <property type="organism ID" value="984"/>
</dbReference>
<dbReference type="UniPathway" id="UPA00768">
    <property type="reaction ID" value="UER00763"/>
</dbReference>
<dbReference type="BioGRID-ORCS" id="855029">
    <property type="hits" value="2 hits in 10 CRISPR screens"/>
</dbReference>
<dbReference type="PRO" id="PR:P54781"/>
<dbReference type="Proteomes" id="UP000002311">
    <property type="component" value="Chromosome XIII"/>
</dbReference>
<dbReference type="RNAct" id="P54781">
    <property type="molecule type" value="protein"/>
</dbReference>
<dbReference type="GO" id="GO:0005783">
    <property type="term" value="C:endoplasmic reticulum"/>
    <property type="evidence" value="ECO:0007005"/>
    <property type="project" value="SGD"/>
</dbReference>
<dbReference type="GO" id="GO:0005789">
    <property type="term" value="C:endoplasmic reticulum membrane"/>
    <property type="evidence" value="ECO:0007669"/>
    <property type="project" value="UniProtKB-SubCell"/>
</dbReference>
<dbReference type="GO" id="GO:0000249">
    <property type="term" value="F:C-22 sterol desaturase (NADPH) activity"/>
    <property type="evidence" value="ECO:0000314"/>
    <property type="project" value="SGD"/>
</dbReference>
<dbReference type="GO" id="GO:0020037">
    <property type="term" value="F:heme binding"/>
    <property type="evidence" value="ECO:0007669"/>
    <property type="project" value="InterPro"/>
</dbReference>
<dbReference type="GO" id="GO:0005506">
    <property type="term" value="F:iron ion binding"/>
    <property type="evidence" value="ECO:0007669"/>
    <property type="project" value="InterPro"/>
</dbReference>
<dbReference type="GO" id="GO:0004497">
    <property type="term" value="F:monooxygenase activity"/>
    <property type="evidence" value="ECO:0007669"/>
    <property type="project" value="InterPro"/>
</dbReference>
<dbReference type="GO" id="GO:0016491">
    <property type="term" value="F:oxidoreductase activity"/>
    <property type="evidence" value="ECO:0000318"/>
    <property type="project" value="GO_Central"/>
</dbReference>
<dbReference type="GO" id="GO:0006696">
    <property type="term" value="P:ergosterol biosynthetic process"/>
    <property type="evidence" value="ECO:0000314"/>
    <property type="project" value="SGD"/>
</dbReference>
<dbReference type="CDD" id="cd11082">
    <property type="entry name" value="CYP61_CYP710"/>
    <property type="match status" value="1"/>
</dbReference>
<dbReference type="FunFam" id="1.10.630.10:FF:000021">
    <property type="entry name" value="Cytochrome P450 61"/>
    <property type="match status" value="1"/>
</dbReference>
<dbReference type="Gene3D" id="1.10.630.10">
    <property type="entry name" value="Cytochrome P450"/>
    <property type="match status" value="1"/>
</dbReference>
<dbReference type="InterPro" id="IPR001128">
    <property type="entry name" value="Cyt_P450"/>
</dbReference>
<dbReference type="InterPro" id="IPR017972">
    <property type="entry name" value="Cyt_P450_CS"/>
</dbReference>
<dbReference type="InterPro" id="IPR002403">
    <property type="entry name" value="Cyt_P450_E_grp-IV"/>
</dbReference>
<dbReference type="InterPro" id="IPR036396">
    <property type="entry name" value="Cyt_P450_sf"/>
</dbReference>
<dbReference type="PANTHER" id="PTHR24286:SF228">
    <property type="entry name" value="C-22 STEROL DESATURASE ERG5"/>
    <property type="match status" value="1"/>
</dbReference>
<dbReference type="PANTHER" id="PTHR24286">
    <property type="entry name" value="CYTOCHROME P450 26"/>
    <property type="match status" value="1"/>
</dbReference>
<dbReference type="Pfam" id="PF00067">
    <property type="entry name" value="p450"/>
    <property type="match status" value="1"/>
</dbReference>
<dbReference type="PRINTS" id="PR00465">
    <property type="entry name" value="EP450IV"/>
</dbReference>
<dbReference type="SUPFAM" id="SSF48264">
    <property type="entry name" value="Cytochrome P450"/>
    <property type="match status" value="1"/>
</dbReference>
<dbReference type="PROSITE" id="PS00086">
    <property type="entry name" value="CYTOCHROME_P450"/>
    <property type="match status" value="1"/>
</dbReference>
<evidence type="ECO:0000250" key="1">
    <source>
        <dbReference type="UniProtKB" id="P04798"/>
    </source>
</evidence>
<evidence type="ECO:0000255" key="2"/>
<evidence type="ECO:0000269" key="3">
    <source>
    </source>
</evidence>
<evidence type="ECO:0000269" key="4">
    <source>
    </source>
</evidence>
<evidence type="ECO:0000269" key="5">
    <source>
    </source>
</evidence>
<evidence type="ECO:0000269" key="6">
    <source>
    </source>
</evidence>
<evidence type="ECO:0000269" key="7">
    <source>
    </source>
</evidence>
<evidence type="ECO:0000269" key="8">
    <source>
    </source>
</evidence>
<evidence type="ECO:0000303" key="9">
    <source>
    </source>
</evidence>
<evidence type="ECO:0000303" key="10">
    <source>
    </source>
</evidence>
<evidence type="ECO:0000303" key="11">
    <source>
    </source>
</evidence>
<evidence type="ECO:0000305" key="12"/>
<accession>P54781</accession>
<accession>D6VZI9</accession>
<accession>E9P965</accession>
<name>ERG5_YEAST</name>
<sequence>MSSVAENIIQHATHNSTLHQLAKDQPSVGVTTAFSILDTLKSMSYLKIFATLICILLVWDQVAYQIKKGSIAGPKFKFWPIIGPFLESLDPKFEEYKAKWASGPLSCVSIFHKFVVIASTRDLARKILQSSKFVKPCVVDVAVKILRPCNWVFLDGKAHTDYRKSLNGLFTKQALAQYLPSLEQIMDKYMDKFVRLSKENNYEPQVFFHEMREILCALSLNSFCGNYITEDQVRKIADDYYLVTAALELVNFPIIIPYTKTWYGKKTADMAMKIFENCAQMAKDHIAAGGKPVCVMDAWCKLMHDAKNSNDDDSRIYHREFTNKEISEAVFTFLFASQDASSSLACWLFQIVADRPDVLAKIREEQLAVRNNDMSTELNLDLIEKMKYTNMVIKETLRYRPPVLMVPYVVKKNFPVSPNYTAPKGAMLIPTLYPALHDPEVYENPDEFIPERWVEGSKASEAKKNWLVFGCGPHVCLGQTYVMITFAALLGKFALYTDFHHTVTPLSEKIKVFATIFPKDDLLLTFKKRDPITGEVFE</sequence>
<gene>
    <name evidence="11" type="primary">ERG5</name>
    <name evidence="10" type="synonym">CYP61</name>
    <name type="ordered locus">YMR015C</name>
    <name type="ORF">YM9711.02C</name>
</gene>
<protein>
    <recommendedName>
        <fullName evidence="11">C-22 sterol desaturase ERG5</fullName>
        <ecNumber evidence="7 8">1.14.19.41</ecNumber>
    </recommendedName>
    <alternativeName>
        <fullName evidence="10">Cytochrome P450 61</fullName>
    </alternativeName>
    <alternativeName>
        <fullName evidence="11">Ergosterol biosynthetic protein 5</fullName>
    </alternativeName>
</protein>
<reference key="1">
    <citation type="journal article" date="1996" name="Gene">
        <title>Cloning and characterization of the Saccharomyces cerevisiae C-22 sterol desaturase gene, encoding a second cytochrome P-450 involved in ergosterol biosynthesis.</title>
        <authorList>
            <person name="Skaggs B.A."/>
            <person name="Alexander J.F."/>
            <person name="Pierson C.A."/>
            <person name="Schweitzer K.S."/>
            <person name="Chun K.T."/>
            <person name="Koegel C."/>
            <person name="Barbuch R."/>
            <person name="Bard M."/>
        </authorList>
    </citation>
    <scope>NUCLEOTIDE SEQUENCE [GENOMIC DNA]</scope>
    <scope>FUNCTION</scope>
    <scope>CATALYTIC ACTIVITY</scope>
    <scope>PATHWAY</scope>
</reference>
<reference key="2">
    <citation type="journal article" date="1997" name="Nature">
        <title>The nucleotide sequence of Saccharomyces cerevisiae chromosome XIII.</title>
        <authorList>
            <person name="Bowman S."/>
            <person name="Churcher C.M."/>
            <person name="Badcock K."/>
            <person name="Brown D."/>
            <person name="Chillingworth T."/>
            <person name="Connor R."/>
            <person name="Dedman K."/>
            <person name="Devlin K."/>
            <person name="Gentles S."/>
            <person name="Hamlin N."/>
            <person name="Hunt S."/>
            <person name="Jagels K."/>
            <person name="Lye G."/>
            <person name="Moule S."/>
            <person name="Odell C."/>
            <person name="Pearson D."/>
            <person name="Rajandream M.A."/>
            <person name="Rice P."/>
            <person name="Skelton J."/>
            <person name="Walsh S.V."/>
            <person name="Whitehead S."/>
            <person name="Barrell B.G."/>
        </authorList>
    </citation>
    <scope>NUCLEOTIDE SEQUENCE [LARGE SCALE GENOMIC DNA]</scope>
    <source>
        <strain>ATCC 204508 / S288c</strain>
    </source>
</reference>
<reference key="3">
    <citation type="journal article" date="2014" name="G3 (Bethesda)">
        <title>The reference genome sequence of Saccharomyces cerevisiae: Then and now.</title>
        <authorList>
            <person name="Engel S.R."/>
            <person name="Dietrich F.S."/>
            <person name="Fisk D.G."/>
            <person name="Binkley G."/>
            <person name="Balakrishnan R."/>
            <person name="Costanzo M.C."/>
            <person name="Dwight S.S."/>
            <person name="Hitz B.C."/>
            <person name="Karra K."/>
            <person name="Nash R.S."/>
            <person name="Weng S."/>
            <person name="Wong E.D."/>
            <person name="Lloyd P."/>
            <person name="Skrzypek M.S."/>
            <person name="Miyasato S.R."/>
            <person name="Simison M."/>
            <person name="Cherry J.M."/>
        </authorList>
    </citation>
    <scope>GENOME REANNOTATION</scope>
    <source>
        <strain>ATCC 204508 / S288c</strain>
    </source>
</reference>
<reference key="4">
    <citation type="journal article" date="2007" name="Genome Res.">
        <title>Approaching a complete repository of sequence-verified protein-encoding clones for Saccharomyces cerevisiae.</title>
        <authorList>
            <person name="Hu Y."/>
            <person name="Rolfs A."/>
            <person name="Bhullar B."/>
            <person name="Murthy T.V.S."/>
            <person name="Zhu C."/>
            <person name="Berger M.F."/>
            <person name="Camargo A.A."/>
            <person name="Kelley F."/>
            <person name="McCarron S."/>
            <person name="Jepson D."/>
            <person name="Richardson A."/>
            <person name="Raphael J."/>
            <person name="Moreira D."/>
            <person name="Taycher E."/>
            <person name="Zuo D."/>
            <person name="Mohr S."/>
            <person name="Kane M.F."/>
            <person name="Williamson J."/>
            <person name="Simpson A.J.G."/>
            <person name="Bulyk M.L."/>
            <person name="Harlow E."/>
            <person name="Marsischky G."/>
            <person name="Kolodner R.D."/>
            <person name="LaBaer J."/>
        </authorList>
    </citation>
    <scope>NUCLEOTIDE SEQUENCE [GENOMIC DNA]</scope>
    <source>
        <strain>ATCC 204508 / S288c</strain>
    </source>
</reference>
<reference key="5">
    <citation type="journal article" date="1995" name="FEBS Lett.">
        <title>Purification and reconstitution of activity of Saccharomyces cerevisiae P450 61, a sterol delta 22-desaturase.</title>
        <authorList>
            <person name="Kelly S.L."/>
            <person name="Lamb D.C."/>
            <person name="Corran A.J."/>
            <person name="Baldwin B.C."/>
            <person name="Parks L.W."/>
            <person name="Kelly D.E."/>
        </authorList>
    </citation>
    <scope>PROTEIN SEQUENCE OF 32-42</scope>
    <scope>FUNCTION</scope>
    <scope>CATALYTIC ACTIVITY</scope>
    <source>
        <strain>DK2</strain>
    </source>
</reference>
<reference key="6">
    <citation type="journal article" date="2003" name="Nature">
        <title>Global analysis of protein expression in yeast.</title>
        <authorList>
            <person name="Ghaemmaghami S."/>
            <person name="Huh W.-K."/>
            <person name="Bower K."/>
            <person name="Howson R.W."/>
            <person name="Belle A."/>
            <person name="Dephoure N."/>
            <person name="O'Shea E.K."/>
            <person name="Weissman J.S."/>
        </authorList>
    </citation>
    <scope>LEVEL OF PROTEIN EXPRESSION [LARGE SCALE ANALYSIS]</scope>
</reference>
<reference key="7">
    <citation type="journal article" date="2003" name="Nat. Biotechnol.">
        <title>A proteomics approach to understanding protein ubiquitination.</title>
        <authorList>
            <person name="Peng J."/>
            <person name="Schwartz D."/>
            <person name="Elias J.E."/>
            <person name="Thoreen C.C."/>
            <person name="Cheng D."/>
            <person name="Marsischky G."/>
            <person name="Roelofs J."/>
            <person name="Finley D."/>
            <person name="Gygi S.P."/>
        </authorList>
    </citation>
    <scope>UBIQUITINATION [LARGE SCALE ANALYSIS] AT LYS-164 AND LYS-198</scope>
    <scope>IDENTIFICATION BY MASS SPECTROMETRY</scope>
    <source>
        <strain>SUB592</strain>
    </source>
</reference>
<reference key="8">
    <citation type="journal article" date="2005" name="J. Lipid Res.">
        <title>Erg28p is a key protein in the yeast sterol biosynthetic enzyme complex.</title>
        <authorList>
            <person name="Mo C."/>
            <person name="Bard M."/>
        </authorList>
    </citation>
    <scope>FUNCTION</scope>
    <scope>INTERACTION WITH ERG28</scope>
</reference>
<reference key="9">
    <citation type="journal article" date="2020" name="Genes (Basel)">
        <title>Regulation of ergosterol biosynthesis in Saccharomyces cerevisiae.</title>
        <authorList>
            <person name="Jorda T."/>
            <person name="Puig S."/>
        </authorList>
    </citation>
    <scope>REVIEW ON ERGOSTEROL BIOSYNTHESIS</scope>
</reference>
<reference key="10">
    <citation type="journal article" date="2023" name="Sci. Rep.">
        <title>Yeast lacking the sterol C-5 desaturase Erg3 are tolerant to the anti-inflammatory triterpenoid saponin escin.</title>
        <authorList>
            <person name="Johnston E.J."/>
            <person name="Tallis J."/>
            <person name="Cunningham-Oakes E."/>
            <person name="Moses T."/>
            <person name="Moore S.J."/>
            <person name="Hosking S."/>
            <person name="Rosser S.J."/>
        </authorList>
    </citation>
    <scope>DISRUPTION PHENOTYPE</scope>
</reference>